<proteinExistence type="inferred from homology"/>
<protein>
    <recommendedName>
        <fullName evidence="1">Large ribosomal subunit protein uL14</fullName>
    </recommendedName>
    <alternativeName>
        <fullName evidence="2">50S ribosomal protein L14</fullName>
    </alternativeName>
</protein>
<reference key="1">
    <citation type="journal article" date="2011" name="J. Bacteriol.">
        <title>Complete genome sequence of the metabolically versatile plant growth-promoting endophyte, Variovorax paradoxus S110.</title>
        <authorList>
            <person name="Han J.I."/>
            <person name="Choi H.K."/>
            <person name="Lee S.W."/>
            <person name="Orwin P.M."/>
            <person name="Kim J."/>
            <person name="Laroe S.L."/>
            <person name="Kim T.G."/>
            <person name="O'Neil J."/>
            <person name="Leadbetter J.R."/>
            <person name="Lee S.Y."/>
            <person name="Hur C.G."/>
            <person name="Spain J.C."/>
            <person name="Ovchinnikova G."/>
            <person name="Goodwin L."/>
            <person name="Han C."/>
        </authorList>
    </citation>
    <scope>NUCLEOTIDE SEQUENCE [LARGE SCALE GENOMIC DNA]</scope>
    <source>
        <strain>S110</strain>
    </source>
</reference>
<gene>
    <name evidence="1" type="primary">rplN</name>
    <name type="ordered locus">Vapar_5060</name>
</gene>
<keyword id="KW-0687">Ribonucleoprotein</keyword>
<keyword id="KW-0689">Ribosomal protein</keyword>
<keyword id="KW-0694">RNA-binding</keyword>
<keyword id="KW-0699">rRNA-binding</keyword>
<organism>
    <name type="scientific">Variovorax paradoxus (strain S110)</name>
    <dbReference type="NCBI Taxonomy" id="543728"/>
    <lineage>
        <taxon>Bacteria</taxon>
        <taxon>Pseudomonadati</taxon>
        <taxon>Pseudomonadota</taxon>
        <taxon>Betaproteobacteria</taxon>
        <taxon>Burkholderiales</taxon>
        <taxon>Comamonadaceae</taxon>
        <taxon>Variovorax</taxon>
    </lineage>
</organism>
<evidence type="ECO:0000255" key="1">
    <source>
        <dbReference type="HAMAP-Rule" id="MF_01367"/>
    </source>
</evidence>
<evidence type="ECO:0000305" key="2"/>
<accession>C5CQ90</accession>
<dbReference type="EMBL" id="CP001635">
    <property type="protein sequence ID" value="ACS21662.1"/>
    <property type="molecule type" value="Genomic_DNA"/>
</dbReference>
<dbReference type="SMR" id="C5CQ90"/>
<dbReference type="STRING" id="543728.Vapar_5060"/>
<dbReference type="KEGG" id="vap:Vapar_5060"/>
<dbReference type="eggNOG" id="COG0093">
    <property type="taxonomic scope" value="Bacteria"/>
</dbReference>
<dbReference type="HOGENOM" id="CLU_095071_2_1_4"/>
<dbReference type="OrthoDB" id="9806379at2"/>
<dbReference type="GO" id="GO:0022625">
    <property type="term" value="C:cytosolic large ribosomal subunit"/>
    <property type="evidence" value="ECO:0007669"/>
    <property type="project" value="TreeGrafter"/>
</dbReference>
<dbReference type="GO" id="GO:0070180">
    <property type="term" value="F:large ribosomal subunit rRNA binding"/>
    <property type="evidence" value="ECO:0007669"/>
    <property type="project" value="TreeGrafter"/>
</dbReference>
<dbReference type="GO" id="GO:0003735">
    <property type="term" value="F:structural constituent of ribosome"/>
    <property type="evidence" value="ECO:0007669"/>
    <property type="project" value="InterPro"/>
</dbReference>
<dbReference type="GO" id="GO:0006412">
    <property type="term" value="P:translation"/>
    <property type="evidence" value="ECO:0007669"/>
    <property type="project" value="UniProtKB-UniRule"/>
</dbReference>
<dbReference type="CDD" id="cd00337">
    <property type="entry name" value="Ribosomal_uL14"/>
    <property type="match status" value="1"/>
</dbReference>
<dbReference type="FunFam" id="2.40.150.20:FF:000001">
    <property type="entry name" value="50S ribosomal protein L14"/>
    <property type="match status" value="1"/>
</dbReference>
<dbReference type="Gene3D" id="2.40.150.20">
    <property type="entry name" value="Ribosomal protein L14"/>
    <property type="match status" value="1"/>
</dbReference>
<dbReference type="HAMAP" id="MF_01367">
    <property type="entry name" value="Ribosomal_uL14"/>
    <property type="match status" value="1"/>
</dbReference>
<dbReference type="InterPro" id="IPR000218">
    <property type="entry name" value="Ribosomal_uL14"/>
</dbReference>
<dbReference type="InterPro" id="IPR005745">
    <property type="entry name" value="Ribosomal_uL14_bac-type"/>
</dbReference>
<dbReference type="InterPro" id="IPR019972">
    <property type="entry name" value="Ribosomal_uL14_CS"/>
</dbReference>
<dbReference type="InterPro" id="IPR036853">
    <property type="entry name" value="Ribosomal_uL14_sf"/>
</dbReference>
<dbReference type="NCBIfam" id="TIGR01067">
    <property type="entry name" value="rplN_bact"/>
    <property type="match status" value="1"/>
</dbReference>
<dbReference type="PANTHER" id="PTHR11761">
    <property type="entry name" value="50S/60S RIBOSOMAL PROTEIN L14/L23"/>
    <property type="match status" value="1"/>
</dbReference>
<dbReference type="PANTHER" id="PTHR11761:SF3">
    <property type="entry name" value="LARGE RIBOSOMAL SUBUNIT PROTEIN UL14M"/>
    <property type="match status" value="1"/>
</dbReference>
<dbReference type="Pfam" id="PF00238">
    <property type="entry name" value="Ribosomal_L14"/>
    <property type="match status" value="1"/>
</dbReference>
<dbReference type="SMART" id="SM01374">
    <property type="entry name" value="Ribosomal_L14"/>
    <property type="match status" value="1"/>
</dbReference>
<dbReference type="SUPFAM" id="SSF50193">
    <property type="entry name" value="Ribosomal protein L14"/>
    <property type="match status" value="1"/>
</dbReference>
<dbReference type="PROSITE" id="PS00049">
    <property type="entry name" value="RIBOSOMAL_L14"/>
    <property type="match status" value="1"/>
</dbReference>
<comment type="function">
    <text evidence="1">Binds to 23S rRNA. Forms part of two intersubunit bridges in the 70S ribosome.</text>
</comment>
<comment type="subunit">
    <text evidence="1">Part of the 50S ribosomal subunit. Forms a cluster with proteins L3 and L19. In the 70S ribosome, L14 and L19 interact and together make contacts with the 16S rRNA in bridges B5 and B8.</text>
</comment>
<comment type="similarity">
    <text evidence="1">Belongs to the universal ribosomal protein uL14 family.</text>
</comment>
<name>RL14_VARPS</name>
<sequence length="122" mass="13181">MIQTESRLEVADNTGAKSVLCIKVLGGSKRRYASVGDVIKVSIKEAAPRGRVKKGEIYSAVVVRTAKGIRRADGSLVKFDGNAAVLLNAKLEPIGTRIFGPVTRELRTEKFMKIVSLAPEVL</sequence>
<feature type="chain" id="PRO_1000214995" description="Large ribosomal subunit protein uL14">
    <location>
        <begin position="1"/>
        <end position="122"/>
    </location>
</feature>